<organism>
    <name type="scientific">Candida glabrata (strain ATCC 2001 / BCRC 20586 / JCM 3761 / NBRC 0622 / NRRL Y-65 / CBS 138)</name>
    <name type="common">Yeast</name>
    <name type="synonym">Nakaseomyces glabratus</name>
    <dbReference type="NCBI Taxonomy" id="284593"/>
    <lineage>
        <taxon>Eukaryota</taxon>
        <taxon>Fungi</taxon>
        <taxon>Dikarya</taxon>
        <taxon>Ascomycota</taxon>
        <taxon>Saccharomycotina</taxon>
        <taxon>Saccharomycetes</taxon>
        <taxon>Saccharomycetales</taxon>
        <taxon>Saccharomycetaceae</taxon>
        <taxon>Nakaseomyces</taxon>
    </lineage>
</organism>
<sequence>MRLSSNWSKLQDGVTKKAGKKRIDKKPHIIKKVGQDKKPKSKIMGMIYQMNKEIDQQKENKKVGKKFEFTETITEIDTVETTTETKKDANKIGKYIAMDCEFVGVGPEGKDSALARVSLVNFHGNVVLDIFVKPRETVTDWRTWVSGITPDHMKNAVSFKQAQQQLSDILKDKILVGHAVKHDLEALMLSHPKSKVIDTARHLPFRQKYAKGKSPSLKKLAKEILNMDIQSGQHSSVEDARATMLIYKSAKQDFDKEHRKKFH</sequence>
<comment type="function">
    <text evidence="1">Exoribonuclease involved in ribosome biosynthesis. Involved in the processing of ITS1, the internal transcribed spacer localized between the 18S and 5.8S rRNAs (By similarity).</text>
</comment>
<comment type="subcellular location">
    <subcellularLocation>
        <location evidence="1">Nucleus</location>
    </subcellularLocation>
</comment>
<comment type="similarity">
    <text evidence="3">Belongs to the REXO4 family.</text>
</comment>
<keyword id="KW-0269">Exonuclease</keyword>
<keyword id="KW-0378">Hydrolase</keyword>
<keyword id="KW-0540">Nuclease</keyword>
<keyword id="KW-0539">Nucleus</keyword>
<keyword id="KW-1185">Reference proteome</keyword>
<keyword id="KW-0698">rRNA processing</keyword>
<dbReference type="EC" id="3.1.-.-"/>
<dbReference type="EMBL" id="CR380955">
    <property type="protein sequence ID" value="CAG60531.1"/>
    <property type="molecule type" value="Genomic_DNA"/>
</dbReference>
<dbReference type="RefSeq" id="XP_447594.1">
    <property type="nucleotide sequence ID" value="XM_447594.1"/>
</dbReference>
<dbReference type="SMR" id="Q6FQA0"/>
<dbReference type="FunCoup" id="Q6FQA0">
    <property type="interactions" value="859"/>
</dbReference>
<dbReference type="STRING" id="284593.Q6FQA0"/>
<dbReference type="EnsemblFungi" id="CAGL0I07931g-T">
    <property type="protein sequence ID" value="CAGL0I07931g-T-p1"/>
    <property type="gene ID" value="CAGL0I07931g"/>
</dbReference>
<dbReference type="KEGG" id="cgr:2889234"/>
<dbReference type="CGD" id="CAL0132752">
    <property type="gene designation" value="CAGL0I07931g"/>
</dbReference>
<dbReference type="VEuPathDB" id="FungiDB:B1J91_I07931g"/>
<dbReference type="VEuPathDB" id="FungiDB:CAGL0I07931g"/>
<dbReference type="eggNOG" id="KOG2249">
    <property type="taxonomic scope" value="Eukaryota"/>
</dbReference>
<dbReference type="HOGENOM" id="CLU_022453_2_0_1"/>
<dbReference type="InParanoid" id="Q6FQA0"/>
<dbReference type="OMA" id="TMLIYKS"/>
<dbReference type="Proteomes" id="UP000002428">
    <property type="component" value="Chromosome I"/>
</dbReference>
<dbReference type="GO" id="GO:0005634">
    <property type="term" value="C:nucleus"/>
    <property type="evidence" value="ECO:0007669"/>
    <property type="project" value="UniProtKB-SubCell"/>
</dbReference>
<dbReference type="GO" id="GO:0008408">
    <property type="term" value="F:3'-5' exonuclease activity"/>
    <property type="evidence" value="ECO:0007669"/>
    <property type="project" value="InterPro"/>
</dbReference>
<dbReference type="GO" id="GO:0003676">
    <property type="term" value="F:nucleic acid binding"/>
    <property type="evidence" value="ECO:0007669"/>
    <property type="project" value="InterPro"/>
</dbReference>
<dbReference type="GO" id="GO:0000027">
    <property type="term" value="P:ribosomal large subunit assembly"/>
    <property type="evidence" value="ECO:0007669"/>
    <property type="project" value="TreeGrafter"/>
</dbReference>
<dbReference type="GO" id="GO:0006364">
    <property type="term" value="P:rRNA processing"/>
    <property type="evidence" value="ECO:0007669"/>
    <property type="project" value="UniProtKB-KW"/>
</dbReference>
<dbReference type="CDD" id="cd06144">
    <property type="entry name" value="REX4_like"/>
    <property type="match status" value="1"/>
</dbReference>
<dbReference type="FunFam" id="3.30.420.10:FF:000007">
    <property type="entry name" value="Interferon-stimulated exonuclease gene 20"/>
    <property type="match status" value="1"/>
</dbReference>
<dbReference type="Gene3D" id="3.30.420.10">
    <property type="entry name" value="Ribonuclease H-like superfamily/Ribonuclease H"/>
    <property type="match status" value="1"/>
</dbReference>
<dbReference type="InterPro" id="IPR013520">
    <property type="entry name" value="Exonuclease_RNaseT/DNA_pol3"/>
</dbReference>
<dbReference type="InterPro" id="IPR037431">
    <property type="entry name" value="REX4_DEDDh_dom"/>
</dbReference>
<dbReference type="InterPro" id="IPR047021">
    <property type="entry name" value="REXO1/3/4-like"/>
</dbReference>
<dbReference type="InterPro" id="IPR012337">
    <property type="entry name" value="RNaseH-like_sf"/>
</dbReference>
<dbReference type="InterPro" id="IPR036397">
    <property type="entry name" value="RNaseH_sf"/>
</dbReference>
<dbReference type="PANTHER" id="PTHR12801:SF45">
    <property type="entry name" value="RNA EXONUCLEASE 4"/>
    <property type="match status" value="1"/>
</dbReference>
<dbReference type="PANTHER" id="PTHR12801">
    <property type="entry name" value="RNA EXONUCLEASE REXO1 / RECO3 FAMILY MEMBER-RELATED"/>
    <property type="match status" value="1"/>
</dbReference>
<dbReference type="Pfam" id="PF00929">
    <property type="entry name" value="RNase_T"/>
    <property type="match status" value="1"/>
</dbReference>
<dbReference type="SMART" id="SM00479">
    <property type="entry name" value="EXOIII"/>
    <property type="match status" value="1"/>
</dbReference>
<dbReference type="SUPFAM" id="SSF53098">
    <property type="entry name" value="Ribonuclease H-like"/>
    <property type="match status" value="1"/>
</dbReference>
<feature type="chain" id="PRO_0000131693" description="RNA exonuclease 4">
    <location>
        <begin position="1"/>
        <end position="263"/>
    </location>
</feature>
<feature type="domain" description="Exonuclease">
    <location>
        <begin position="95"/>
        <end position="247"/>
    </location>
</feature>
<feature type="region of interest" description="Disordered" evidence="2">
    <location>
        <begin position="1"/>
        <end position="27"/>
    </location>
</feature>
<feature type="compositionally biased region" description="Basic residues" evidence="2">
    <location>
        <begin position="17"/>
        <end position="27"/>
    </location>
</feature>
<protein>
    <recommendedName>
        <fullName>RNA exonuclease 4</fullName>
        <ecNumber>3.1.-.-</ecNumber>
    </recommendedName>
</protein>
<evidence type="ECO:0000250" key="1"/>
<evidence type="ECO:0000256" key="2">
    <source>
        <dbReference type="SAM" id="MobiDB-lite"/>
    </source>
</evidence>
<evidence type="ECO:0000305" key="3"/>
<accession>Q6FQA0</accession>
<reference key="1">
    <citation type="journal article" date="2004" name="Nature">
        <title>Genome evolution in yeasts.</title>
        <authorList>
            <person name="Dujon B."/>
            <person name="Sherman D."/>
            <person name="Fischer G."/>
            <person name="Durrens P."/>
            <person name="Casaregola S."/>
            <person name="Lafontaine I."/>
            <person name="de Montigny J."/>
            <person name="Marck C."/>
            <person name="Neuveglise C."/>
            <person name="Talla E."/>
            <person name="Goffard N."/>
            <person name="Frangeul L."/>
            <person name="Aigle M."/>
            <person name="Anthouard V."/>
            <person name="Babour A."/>
            <person name="Barbe V."/>
            <person name="Barnay S."/>
            <person name="Blanchin S."/>
            <person name="Beckerich J.-M."/>
            <person name="Beyne E."/>
            <person name="Bleykasten C."/>
            <person name="Boisrame A."/>
            <person name="Boyer J."/>
            <person name="Cattolico L."/>
            <person name="Confanioleri F."/>
            <person name="de Daruvar A."/>
            <person name="Despons L."/>
            <person name="Fabre E."/>
            <person name="Fairhead C."/>
            <person name="Ferry-Dumazet H."/>
            <person name="Groppi A."/>
            <person name="Hantraye F."/>
            <person name="Hennequin C."/>
            <person name="Jauniaux N."/>
            <person name="Joyet P."/>
            <person name="Kachouri R."/>
            <person name="Kerrest A."/>
            <person name="Koszul R."/>
            <person name="Lemaire M."/>
            <person name="Lesur I."/>
            <person name="Ma L."/>
            <person name="Muller H."/>
            <person name="Nicaud J.-M."/>
            <person name="Nikolski M."/>
            <person name="Oztas S."/>
            <person name="Ozier-Kalogeropoulos O."/>
            <person name="Pellenz S."/>
            <person name="Potier S."/>
            <person name="Richard G.-F."/>
            <person name="Straub M.-L."/>
            <person name="Suleau A."/>
            <person name="Swennen D."/>
            <person name="Tekaia F."/>
            <person name="Wesolowski-Louvel M."/>
            <person name="Westhof E."/>
            <person name="Wirth B."/>
            <person name="Zeniou-Meyer M."/>
            <person name="Zivanovic Y."/>
            <person name="Bolotin-Fukuhara M."/>
            <person name="Thierry A."/>
            <person name="Bouchier C."/>
            <person name="Caudron B."/>
            <person name="Scarpelli C."/>
            <person name="Gaillardin C."/>
            <person name="Weissenbach J."/>
            <person name="Wincker P."/>
            <person name="Souciet J.-L."/>
        </authorList>
    </citation>
    <scope>NUCLEOTIDE SEQUENCE [LARGE SCALE GENOMIC DNA]</scope>
    <source>
        <strain>ATCC 2001 / BCRC 20586 / JCM 3761 / NBRC 0622 / NRRL Y-65 / CBS 138</strain>
    </source>
</reference>
<name>REXO4_CANGA</name>
<gene>
    <name type="primary">REX4</name>
    <name type="ordered locus">CAGL0I07931g</name>
</gene>
<proteinExistence type="inferred from homology"/>